<organism>
    <name type="scientific">Shewanella loihica (strain ATCC BAA-1088 / PV-4)</name>
    <dbReference type="NCBI Taxonomy" id="323850"/>
    <lineage>
        <taxon>Bacteria</taxon>
        <taxon>Pseudomonadati</taxon>
        <taxon>Pseudomonadota</taxon>
        <taxon>Gammaproteobacteria</taxon>
        <taxon>Alteromonadales</taxon>
        <taxon>Shewanellaceae</taxon>
        <taxon>Shewanella</taxon>
    </lineage>
</organism>
<protein>
    <recommendedName>
        <fullName evidence="2">Elongation factor Tu 2</fullName>
        <shortName evidence="2">EF-Tu 2</shortName>
        <ecNumber evidence="2">3.6.5.3</ecNumber>
    </recommendedName>
</protein>
<evidence type="ECO:0000250" key="1"/>
<evidence type="ECO:0000255" key="2">
    <source>
        <dbReference type="HAMAP-Rule" id="MF_00118"/>
    </source>
</evidence>
<feature type="chain" id="PRO_0000337528" description="Elongation factor Tu 2">
    <location>
        <begin position="1"/>
        <end position="394"/>
    </location>
</feature>
<feature type="domain" description="tr-type G">
    <location>
        <begin position="10"/>
        <end position="204"/>
    </location>
</feature>
<feature type="region of interest" description="G1" evidence="1">
    <location>
        <begin position="19"/>
        <end position="26"/>
    </location>
</feature>
<feature type="region of interest" description="G2" evidence="1">
    <location>
        <begin position="60"/>
        <end position="64"/>
    </location>
</feature>
<feature type="region of interest" description="G3" evidence="1">
    <location>
        <begin position="81"/>
        <end position="84"/>
    </location>
</feature>
<feature type="region of interest" description="G4" evidence="1">
    <location>
        <begin position="136"/>
        <end position="139"/>
    </location>
</feature>
<feature type="region of interest" description="G5" evidence="1">
    <location>
        <begin position="174"/>
        <end position="176"/>
    </location>
</feature>
<feature type="binding site" evidence="2">
    <location>
        <begin position="19"/>
        <end position="26"/>
    </location>
    <ligand>
        <name>GTP</name>
        <dbReference type="ChEBI" id="CHEBI:37565"/>
    </ligand>
</feature>
<feature type="binding site" evidence="2">
    <location>
        <position position="26"/>
    </location>
    <ligand>
        <name>Mg(2+)</name>
        <dbReference type="ChEBI" id="CHEBI:18420"/>
    </ligand>
</feature>
<feature type="binding site" evidence="2">
    <location>
        <begin position="81"/>
        <end position="85"/>
    </location>
    <ligand>
        <name>GTP</name>
        <dbReference type="ChEBI" id="CHEBI:37565"/>
    </ligand>
</feature>
<feature type="binding site" evidence="2">
    <location>
        <begin position="136"/>
        <end position="139"/>
    </location>
    <ligand>
        <name>GTP</name>
        <dbReference type="ChEBI" id="CHEBI:37565"/>
    </ligand>
</feature>
<name>EFTU2_SHELP</name>
<sequence>MAKEKFERSKPHVNVGTIGHVDHGKTTLTAAISHVLTKTYGGEAKDFAQIDNAPEERERGITINTSHIEYDTPTRHYAHVDCPGHADYVKNMITGAAQMDGAILVVASTDGPMPQTREHILLSRQVGVPFIIVFMNKCDMVDDEELLELVEMEVRELLSEYDFPGDDLPVIQGSALKALEGEPEWEAKILELAEALDSYIPEPERAIDGAFILPIEDVFSISGRGTVVTGRVERGIVKVGDEVEIVGIKETTKTTCTGVEMFRKLLDEGRAGENCGVLLRGTKRDEVERGQVLAQPGSITPHTQFESEVYVLSKEEGGRHTPFFKGYRPQFYFRTTDVTGTIELPEGVEMVMPGDNIKMVVTLICPIAMDEGLRFAIREGGRTVGAGVVAKIIA</sequence>
<reference key="1">
    <citation type="submission" date="2007-03" db="EMBL/GenBank/DDBJ databases">
        <title>Complete sequence of Shewanella loihica PV-4.</title>
        <authorList>
            <consortium name="US DOE Joint Genome Institute"/>
            <person name="Copeland A."/>
            <person name="Lucas S."/>
            <person name="Lapidus A."/>
            <person name="Barry K."/>
            <person name="Detter J.C."/>
            <person name="Glavina del Rio T."/>
            <person name="Hammon N."/>
            <person name="Israni S."/>
            <person name="Dalin E."/>
            <person name="Tice H."/>
            <person name="Pitluck S."/>
            <person name="Chain P."/>
            <person name="Malfatti S."/>
            <person name="Shin M."/>
            <person name="Vergez L."/>
            <person name="Schmutz J."/>
            <person name="Larimer F."/>
            <person name="Land M."/>
            <person name="Hauser L."/>
            <person name="Kyrpides N."/>
            <person name="Mikhailova N."/>
            <person name="Romine M.F."/>
            <person name="Serres G."/>
            <person name="Fredrickson J."/>
            <person name="Tiedje J."/>
            <person name="Richardson P."/>
        </authorList>
    </citation>
    <scope>NUCLEOTIDE SEQUENCE [LARGE SCALE GENOMIC DNA]</scope>
    <source>
        <strain>ATCC BAA-1088 / PV-4</strain>
    </source>
</reference>
<accession>A3Q980</accession>
<comment type="function">
    <text evidence="2">GTP hydrolase that promotes the GTP-dependent binding of aminoacyl-tRNA to the A-site of ribosomes during protein biosynthesis.</text>
</comment>
<comment type="catalytic activity">
    <reaction evidence="2">
        <text>GTP + H2O = GDP + phosphate + H(+)</text>
        <dbReference type="Rhea" id="RHEA:19669"/>
        <dbReference type="ChEBI" id="CHEBI:15377"/>
        <dbReference type="ChEBI" id="CHEBI:15378"/>
        <dbReference type="ChEBI" id="CHEBI:37565"/>
        <dbReference type="ChEBI" id="CHEBI:43474"/>
        <dbReference type="ChEBI" id="CHEBI:58189"/>
        <dbReference type="EC" id="3.6.5.3"/>
    </reaction>
    <physiologicalReaction direction="left-to-right" evidence="2">
        <dbReference type="Rhea" id="RHEA:19670"/>
    </physiologicalReaction>
</comment>
<comment type="subunit">
    <text evidence="2">Monomer.</text>
</comment>
<comment type="subcellular location">
    <subcellularLocation>
        <location evidence="2">Cytoplasm</location>
    </subcellularLocation>
</comment>
<comment type="similarity">
    <text evidence="2">Belongs to the TRAFAC class translation factor GTPase superfamily. Classic translation factor GTPase family. EF-Tu/EF-1A subfamily.</text>
</comment>
<gene>
    <name evidence="2" type="primary">tuf2</name>
    <name type="ordered locus">Shew_0156</name>
</gene>
<proteinExistence type="inferred from homology"/>
<dbReference type="EC" id="3.6.5.3" evidence="2"/>
<dbReference type="EMBL" id="CP000606">
    <property type="protein sequence ID" value="ABO22028.1"/>
    <property type="molecule type" value="Genomic_DNA"/>
</dbReference>
<dbReference type="RefSeq" id="WP_011863965.1">
    <property type="nucleotide sequence ID" value="NC_009092.1"/>
</dbReference>
<dbReference type="SMR" id="A3Q980"/>
<dbReference type="STRING" id="323850.Shew_0156"/>
<dbReference type="KEGG" id="slo:Shew_0156"/>
<dbReference type="eggNOG" id="COG0050">
    <property type="taxonomic scope" value="Bacteria"/>
</dbReference>
<dbReference type="HOGENOM" id="CLU_007265_0_1_6"/>
<dbReference type="OrthoDB" id="9803139at2"/>
<dbReference type="Proteomes" id="UP000001558">
    <property type="component" value="Chromosome"/>
</dbReference>
<dbReference type="GO" id="GO:0005829">
    <property type="term" value="C:cytosol"/>
    <property type="evidence" value="ECO:0007669"/>
    <property type="project" value="TreeGrafter"/>
</dbReference>
<dbReference type="GO" id="GO:0005525">
    <property type="term" value="F:GTP binding"/>
    <property type="evidence" value="ECO:0007669"/>
    <property type="project" value="UniProtKB-UniRule"/>
</dbReference>
<dbReference type="GO" id="GO:0003924">
    <property type="term" value="F:GTPase activity"/>
    <property type="evidence" value="ECO:0007669"/>
    <property type="project" value="InterPro"/>
</dbReference>
<dbReference type="GO" id="GO:0097216">
    <property type="term" value="F:guanosine tetraphosphate binding"/>
    <property type="evidence" value="ECO:0007669"/>
    <property type="project" value="UniProtKB-ARBA"/>
</dbReference>
<dbReference type="GO" id="GO:0003746">
    <property type="term" value="F:translation elongation factor activity"/>
    <property type="evidence" value="ECO:0007669"/>
    <property type="project" value="UniProtKB-UniRule"/>
</dbReference>
<dbReference type="CDD" id="cd01884">
    <property type="entry name" value="EF_Tu"/>
    <property type="match status" value="1"/>
</dbReference>
<dbReference type="CDD" id="cd03697">
    <property type="entry name" value="EFTU_II"/>
    <property type="match status" value="1"/>
</dbReference>
<dbReference type="CDD" id="cd03707">
    <property type="entry name" value="EFTU_III"/>
    <property type="match status" value="1"/>
</dbReference>
<dbReference type="FunFam" id="2.40.30.10:FF:000001">
    <property type="entry name" value="Elongation factor Tu"/>
    <property type="match status" value="1"/>
</dbReference>
<dbReference type="FunFam" id="3.40.50.300:FF:000003">
    <property type="entry name" value="Elongation factor Tu"/>
    <property type="match status" value="1"/>
</dbReference>
<dbReference type="Gene3D" id="3.40.50.300">
    <property type="entry name" value="P-loop containing nucleotide triphosphate hydrolases"/>
    <property type="match status" value="1"/>
</dbReference>
<dbReference type="Gene3D" id="2.40.30.10">
    <property type="entry name" value="Translation factors"/>
    <property type="match status" value="2"/>
</dbReference>
<dbReference type="HAMAP" id="MF_00118_B">
    <property type="entry name" value="EF_Tu_B"/>
    <property type="match status" value="1"/>
</dbReference>
<dbReference type="InterPro" id="IPR041709">
    <property type="entry name" value="EF-Tu_GTP-bd"/>
</dbReference>
<dbReference type="InterPro" id="IPR050055">
    <property type="entry name" value="EF-Tu_GTPase"/>
</dbReference>
<dbReference type="InterPro" id="IPR004161">
    <property type="entry name" value="EFTu-like_2"/>
</dbReference>
<dbReference type="InterPro" id="IPR033720">
    <property type="entry name" value="EFTU_2"/>
</dbReference>
<dbReference type="InterPro" id="IPR031157">
    <property type="entry name" value="G_TR_CS"/>
</dbReference>
<dbReference type="InterPro" id="IPR027417">
    <property type="entry name" value="P-loop_NTPase"/>
</dbReference>
<dbReference type="InterPro" id="IPR005225">
    <property type="entry name" value="Small_GTP-bd"/>
</dbReference>
<dbReference type="InterPro" id="IPR000795">
    <property type="entry name" value="T_Tr_GTP-bd_dom"/>
</dbReference>
<dbReference type="InterPro" id="IPR009000">
    <property type="entry name" value="Transl_B-barrel_sf"/>
</dbReference>
<dbReference type="InterPro" id="IPR009001">
    <property type="entry name" value="Transl_elong_EF1A/Init_IF2_C"/>
</dbReference>
<dbReference type="InterPro" id="IPR004541">
    <property type="entry name" value="Transl_elong_EFTu/EF1A_bac/org"/>
</dbReference>
<dbReference type="InterPro" id="IPR004160">
    <property type="entry name" value="Transl_elong_EFTu/EF1A_C"/>
</dbReference>
<dbReference type="NCBIfam" id="TIGR00485">
    <property type="entry name" value="EF-Tu"/>
    <property type="match status" value="1"/>
</dbReference>
<dbReference type="NCBIfam" id="NF000766">
    <property type="entry name" value="PRK00049.1"/>
    <property type="match status" value="1"/>
</dbReference>
<dbReference type="NCBIfam" id="NF009372">
    <property type="entry name" value="PRK12735.1"/>
    <property type="match status" value="1"/>
</dbReference>
<dbReference type="NCBIfam" id="NF009373">
    <property type="entry name" value="PRK12736.1"/>
    <property type="match status" value="1"/>
</dbReference>
<dbReference type="NCBIfam" id="TIGR00231">
    <property type="entry name" value="small_GTP"/>
    <property type="match status" value="1"/>
</dbReference>
<dbReference type="PANTHER" id="PTHR43721:SF22">
    <property type="entry name" value="ELONGATION FACTOR TU, MITOCHONDRIAL"/>
    <property type="match status" value="1"/>
</dbReference>
<dbReference type="PANTHER" id="PTHR43721">
    <property type="entry name" value="ELONGATION FACTOR TU-RELATED"/>
    <property type="match status" value="1"/>
</dbReference>
<dbReference type="Pfam" id="PF00009">
    <property type="entry name" value="GTP_EFTU"/>
    <property type="match status" value="1"/>
</dbReference>
<dbReference type="Pfam" id="PF03144">
    <property type="entry name" value="GTP_EFTU_D2"/>
    <property type="match status" value="1"/>
</dbReference>
<dbReference type="Pfam" id="PF03143">
    <property type="entry name" value="GTP_EFTU_D3"/>
    <property type="match status" value="1"/>
</dbReference>
<dbReference type="PRINTS" id="PR00315">
    <property type="entry name" value="ELONGATNFCT"/>
</dbReference>
<dbReference type="SUPFAM" id="SSF50465">
    <property type="entry name" value="EF-Tu/eEF-1alpha/eIF2-gamma C-terminal domain"/>
    <property type="match status" value="1"/>
</dbReference>
<dbReference type="SUPFAM" id="SSF52540">
    <property type="entry name" value="P-loop containing nucleoside triphosphate hydrolases"/>
    <property type="match status" value="1"/>
</dbReference>
<dbReference type="SUPFAM" id="SSF50447">
    <property type="entry name" value="Translation proteins"/>
    <property type="match status" value="1"/>
</dbReference>
<dbReference type="PROSITE" id="PS00301">
    <property type="entry name" value="G_TR_1"/>
    <property type="match status" value="1"/>
</dbReference>
<dbReference type="PROSITE" id="PS51722">
    <property type="entry name" value="G_TR_2"/>
    <property type="match status" value="1"/>
</dbReference>
<keyword id="KW-0963">Cytoplasm</keyword>
<keyword id="KW-0251">Elongation factor</keyword>
<keyword id="KW-0342">GTP-binding</keyword>
<keyword id="KW-0378">Hydrolase</keyword>
<keyword id="KW-0460">Magnesium</keyword>
<keyword id="KW-0479">Metal-binding</keyword>
<keyword id="KW-0547">Nucleotide-binding</keyword>
<keyword id="KW-0648">Protein biosynthesis</keyword>
<keyword id="KW-1185">Reference proteome</keyword>